<feature type="chain" id="PRO_0000401142" description="Basic phospholipase A2 BmjeTX-II">
    <location>
        <begin position="1"/>
        <end position="121"/>
    </location>
</feature>
<feature type="active site" evidence="1">
    <location>
        <position position="48"/>
    </location>
</feature>
<feature type="active site" evidence="1">
    <location>
        <position position="89"/>
    </location>
</feature>
<feature type="binding site" evidence="1">
    <location>
        <position position="27"/>
    </location>
    <ligand>
        <name>Ca(2+)</name>
        <dbReference type="ChEBI" id="CHEBI:29108"/>
    </ligand>
</feature>
<feature type="binding site" evidence="1">
    <location>
        <position position="29"/>
    </location>
    <ligand>
        <name>Ca(2+)</name>
        <dbReference type="ChEBI" id="CHEBI:29108"/>
    </ligand>
</feature>
<feature type="binding site" evidence="1">
    <location>
        <position position="31"/>
    </location>
    <ligand>
        <name>Ca(2+)</name>
        <dbReference type="ChEBI" id="CHEBI:29108"/>
    </ligand>
</feature>
<feature type="binding site" evidence="1">
    <location>
        <position position="49"/>
    </location>
    <ligand>
        <name>Ca(2+)</name>
        <dbReference type="ChEBI" id="CHEBI:29108"/>
    </ligand>
</feature>
<feature type="disulfide bond" evidence="1">
    <location>
        <begin position="26"/>
        <end position="114"/>
    </location>
</feature>
<feature type="disulfide bond" evidence="1">
    <location>
        <begin position="28"/>
        <end position="45"/>
    </location>
</feature>
<feature type="disulfide bond" evidence="1">
    <location>
        <begin position="44"/>
        <end position="95"/>
    </location>
</feature>
<feature type="disulfide bond" evidence="1">
    <location>
        <begin position="50"/>
        <end position="121"/>
    </location>
</feature>
<feature type="disulfide bond" evidence="1">
    <location>
        <begin position="51"/>
        <end position="88"/>
    </location>
</feature>
<feature type="disulfide bond" evidence="1">
    <location>
        <begin position="58"/>
        <end position="82"/>
    </location>
</feature>
<feature type="disulfide bond" evidence="1">
    <location>
        <begin position="76"/>
        <end position="86"/>
    </location>
</feature>
<sequence>DLWQWGQMILKETGKIPFSYYGAYGCYCGWGGRGGKPKAGTDRCCYVHDCCYGKLTSCPKTDDRYSYSRLDLTIVCGEDDPCKELCECDKKIAVCFRENLGTYNKKYRYHLKSCKKADKPC</sequence>
<proteinExistence type="evidence at protein level"/>
<accession>P86804</accession>
<organism>
    <name type="scientific">Bothrops marajoensis</name>
    <name type="common">Marajo lancehead</name>
    <dbReference type="NCBI Taxonomy" id="157554"/>
    <lineage>
        <taxon>Eukaryota</taxon>
        <taxon>Metazoa</taxon>
        <taxon>Chordata</taxon>
        <taxon>Craniata</taxon>
        <taxon>Vertebrata</taxon>
        <taxon>Euteleostomi</taxon>
        <taxon>Lepidosauria</taxon>
        <taxon>Squamata</taxon>
        <taxon>Bifurcata</taxon>
        <taxon>Unidentata</taxon>
        <taxon>Episquamata</taxon>
        <taxon>Toxicofera</taxon>
        <taxon>Serpentes</taxon>
        <taxon>Colubroidea</taxon>
        <taxon>Viperidae</taxon>
        <taxon>Crotalinae</taxon>
        <taxon>Bothrops</taxon>
    </lineage>
</organism>
<evidence type="ECO:0000250" key="1">
    <source>
        <dbReference type="UniProtKB" id="P59071"/>
    </source>
</evidence>
<evidence type="ECO:0000250" key="2">
    <source>
        <dbReference type="UniProtKB" id="P84397"/>
    </source>
</evidence>
<evidence type="ECO:0000255" key="3">
    <source>
        <dbReference type="PROSITE-ProRule" id="PRU10035"/>
    </source>
</evidence>
<evidence type="ECO:0000255" key="4">
    <source>
        <dbReference type="PROSITE-ProRule" id="PRU10036"/>
    </source>
</evidence>
<evidence type="ECO:0000269" key="5">
    <source>
    </source>
</evidence>
<evidence type="ECO:0000305" key="6"/>
<protein>
    <recommendedName>
        <fullName>Basic phospholipase A2 BmjeTX-II</fullName>
        <shortName>svPLA2</shortName>
        <ecNumber>3.1.1.4</ecNumber>
    </recommendedName>
    <alternativeName>
        <fullName evidence="2">Phosphatidylcholine 2-acylhydrolase</fullName>
    </alternativeName>
</protein>
<comment type="function">
    <text evidence="5">Snake venom phospholipase A2 (PLA2) that induces blockade of neuromuscular contraction in an indirectly stimulated chick biventer cervicis nerve-muscle preparation. Does not inhibit contraction of chick biventer cervicic nerve-muscle preparation in response to treatment with acetylcholine or KCl. The neuromuscular blockade is mediated by inhibitory action at the presynaptic motor nerve endings. Lyses skeletal myoblasts and myotubes in vitro, and intramuscular injection causes local muscle necrosis. Induces edema in the mouse foot pad. Induces a transient increase of IL-6 levels. PLA2 catalyzes the calcium-dependent hydrolysis of the 2-acyl groups in 3-sn-phosphoglycerides.</text>
</comment>
<comment type="catalytic activity">
    <reaction evidence="3 4 5">
        <text>a 1,2-diacyl-sn-glycero-3-phosphocholine + H2O = a 1-acyl-sn-glycero-3-phosphocholine + a fatty acid + H(+)</text>
        <dbReference type="Rhea" id="RHEA:15801"/>
        <dbReference type="ChEBI" id="CHEBI:15377"/>
        <dbReference type="ChEBI" id="CHEBI:15378"/>
        <dbReference type="ChEBI" id="CHEBI:28868"/>
        <dbReference type="ChEBI" id="CHEBI:57643"/>
        <dbReference type="ChEBI" id="CHEBI:58168"/>
        <dbReference type="EC" id="3.1.1.4"/>
    </reaction>
</comment>
<comment type="cofactor">
    <cofactor evidence="1">
        <name>Ca(2+)</name>
        <dbReference type="ChEBI" id="CHEBI:29108"/>
    </cofactor>
    <text evidence="1">Binds 1 Ca(2+) ion.</text>
</comment>
<comment type="subcellular location">
    <subcellularLocation>
        <location evidence="5">Secreted</location>
    </subcellularLocation>
</comment>
<comment type="tissue specificity">
    <text evidence="5">Expressed by the venom gland.</text>
</comment>
<comment type="mass spectrometry"/>
<comment type="similarity">
    <text evidence="6">Belongs to the phospholipase A2 family. Group II subfamily. D49 sub-subfamily.</text>
</comment>
<reference evidence="6" key="1">
    <citation type="journal article" date="2010" name="Protein J.">
        <title>Neurotoxic, myotoxic and cytolytic activities of the new basic PLA(2) isoforms BmjeTX-I and BmjeTX-II isolated from the Bothrops marajoensis (Marajo Lancehead) snake venom.</title>
        <authorList>
            <person name="Ponce-Soto L.A."/>
            <person name="Martins-de-Souza D."/>
            <person name="Marangoni S."/>
        </authorList>
    </citation>
    <scope>PROTEIN SEQUENCE</scope>
    <scope>FUNCTION</scope>
    <scope>CATALYTIC ACTIVITY</scope>
    <scope>SUBCELLULAR LOCATION</scope>
    <scope>TISSUE SPECIFICITY</scope>
    <scope>MASS SPECTROMETRY</scope>
    <source>
        <tissue evidence="5">Venom</tissue>
    </source>
</reference>
<dbReference type="EC" id="3.1.1.4"/>
<dbReference type="SMR" id="P86804"/>
<dbReference type="GO" id="GO:0005576">
    <property type="term" value="C:extracellular region"/>
    <property type="evidence" value="ECO:0000314"/>
    <property type="project" value="UniProtKB"/>
</dbReference>
<dbReference type="GO" id="GO:0005509">
    <property type="term" value="F:calcium ion binding"/>
    <property type="evidence" value="ECO:0007669"/>
    <property type="project" value="InterPro"/>
</dbReference>
<dbReference type="GO" id="GO:0047498">
    <property type="term" value="F:calcium-dependent phospholipase A2 activity"/>
    <property type="evidence" value="ECO:0007669"/>
    <property type="project" value="TreeGrafter"/>
</dbReference>
<dbReference type="GO" id="GO:0004623">
    <property type="term" value="F:phospholipase A2 activity"/>
    <property type="evidence" value="ECO:0000314"/>
    <property type="project" value="UniProtKB"/>
</dbReference>
<dbReference type="GO" id="GO:0005543">
    <property type="term" value="F:phospholipid binding"/>
    <property type="evidence" value="ECO:0007669"/>
    <property type="project" value="TreeGrafter"/>
</dbReference>
<dbReference type="GO" id="GO:0090729">
    <property type="term" value="F:toxin activity"/>
    <property type="evidence" value="ECO:0000314"/>
    <property type="project" value="UniProtKB"/>
</dbReference>
<dbReference type="GO" id="GO:0050482">
    <property type="term" value="P:arachidonate secretion"/>
    <property type="evidence" value="ECO:0007669"/>
    <property type="project" value="InterPro"/>
</dbReference>
<dbReference type="GO" id="GO:0051715">
    <property type="term" value="P:cytolysis in another organism"/>
    <property type="evidence" value="ECO:0000314"/>
    <property type="project" value="UniProtKB"/>
</dbReference>
<dbReference type="GO" id="GO:0042130">
    <property type="term" value="P:negative regulation of T cell proliferation"/>
    <property type="evidence" value="ECO:0007669"/>
    <property type="project" value="TreeGrafter"/>
</dbReference>
<dbReference type="GO" id="GO:0009395">
    <property type="term" value="P:phospholipid catabolic process"/>
    <property type="evidence" value="ECO:0000314"/>
    <property type="project" value="UniProtKB"/>
</dbReference>
<dbReference type="GO" id="GO:0044521">
    <property type="term" value="P:venom-mediated muscle damage in another organism"/>
    <property type="evidence" value="ECO:0000314"/>
    <property type="project" value="UniProtKB"/>
</dbReference>
<dbReference type="CDD" id="cd00125">
    <property type="entry name" value="PLA2c"/>
    <property type="match status" value="1"/>
</dbReference>
<dbReference type="FunFam" id="1.20.90.10:FF:000001">
    <property type="entry name" value="Basic phospholipase A2 homolog"/>
    <property type="match status" value="1"/>
</dbReference>
<dbReference type="Gene3D" id="1.20.90.10">
    <property type="entry name" value="Phospholipase A2 domain"/>
    <property type="match status" value="1"/>
</dbReference>
<dbReference type="InterPro" id="IPR001211">
    <property type="entry name" value="PLipase_A2"/>
</dbReference>
<dbReference type="InterPro" id="IPR033112">
    <property type="entry name" value="PLipase_A2_Asp_AS"/>
</dbReference>
<dbReference type="InterPro" id="IPR016090">
    <property type="entry name" value="PLipase_A2_dom"/>
</dbReference>
<dbReference type="InterPro" id="IPR036444">
    <property type="entry name" value="PLipase_A2_dom_sf"/>
</dbReference>
<dbReference type="InterPro" id="IPR033113">
    <property type="entry name" value="PLipase_A2_His_AS"/>
</dbReference>
<dbReference type="PANTHER" id="PTHR11716">
    <property type="entry name" value="PHOSPHOLIPASE A2 FAMILY MEMBER"/>
    <property type="match status" value="1"/>
</dbReference>
<dbReference type="PANTHER" id="PTHR11716:SF9">
    <property type="entry name" value="PHOSPHOLIPASE A2, MEMBRANE ASSOCIATED"/>
    <property type="match status" value="1"/>
</dbReference>
<dbReference type="Pfam" id="PF00068">
    <property type="entry name" value="Phospholip_A2_1"/>
    <property type="match status" value="1"/>
</dbReference>
<dbReference type="PRINTS" id="PR00389">
    <property type="entry name" value="PHPHLIPASEA2"/>
</dbReference>
<dbReference type="SMART" id="SM00085">
    <property type="entry name" value="PA2c"/>
    <property type="match status" value="1"/>
</dbReference>
<dbReference type="SUPFAM" id="SSF48619">
    <property type="entry name" value="Phospholipase A2, PLA2"/>
    <property type="match status" value="1"/>
</dbReference>
<dbReference type="PROSITE" id="PS00119">
    <property type="entry name" value="PA2_ASP"/>
    <property type="match status" value="1"/>
</dbReference>
<dbReference type="PROSITE" id="PS00118">
    <property type="entry name" value="PA2_HIS"/>
    <property type="match status" value="1"/>
</dbReference>
<keyword id="KW-0106">Calcium</keyword>
<keyword id="KW-0204">Cytolysis</keyword>
<keyword id="KW-0903">Direct protein sequencing</keyword>
<keyword id="KW-1015">Disulfide bond</keyword>
<keyword id="KW-0378">Hydrolase</keyword>
<keyword id="KW-0442">Lipid degradation</keyword>
<keyword id="KW-0443">Lipid metabolism</keyword>
<keyword id="KW-0479">Metal-binding</keyword>
<keyword id="KW-0959">Myotoxin</keyword>
<keyword id="KW-0528">Neurotoxin</keyword>
<keyword id="KW-0638">Presynaptic neurotoxin</keyword>
<keyword id="KW-0964">Secreted</keyword>
<keyword id="KW-0800">Toxin</keyword>
<name>PA2B2_BOTMA</name>